<keyword id="KW-0030">Aminoacyl-tRNA synthetase</keyword>
<keyword id="KW-0067">ATP-binding</keyword>
<keyword id="KW-0963">Cytoplasm</keyword>
<keyword id="KW-0436">Ligase</keyword>
<keyword id="KW-0547">Nucleotide-binding</keyword>
<keyword id="KW-0648">Protein biosynthesis</keyword>
<keyword id="KW-0694">RNA-binding</keyword>
<gene>
    <name evidence="1" type="primary">tyrS</name>
    <name type="ordered locus">Spy49_0084</name>
</gene>
<dbReference type="EC" id="6.1.1.1" evidence="1"/>
<dbReference type="EMBL" id="CP000829">
    <property type="protein sequence ID" value="ACI60438.1"/>
    <property type="molecule type" value="Genomic_DNA"/>
</dbReference>
<dbReference type="SMR" id="B5XJ70"/>
<dbReference type="KEGG" id="soz:Spy49_0084"/>
<dbReference type="HOGENOM" id="CLU_024003_0_3_9"/>
<dbReference type="Proteomes" id="UP000001039">
    <property type="component" value="Chromosome"/>
</dbReference>
<dbReference type="GO" id="GO:0005829">
    <property type="term" value="C:cytosol"/>
    <property type="evidence" value="ECO:0007669"/>
    <property type="project" value="TreeGrafter"/>
</dbReference>
<dbReference type="GO" id="GO:0005524">
    <property type="term" value="F:ATP binding"/>
    <property type="evidence" value="ECO:0007669"/>
    <property type="project" value="UniProtKB-UniRule"/>
</dbReference>
<dbReference type="GO" id="GO:0003723">
    <property type="term" value="F:RNA binding"/>
    <property type="evidence" value="ECO:0007669"/>
    <property type="project" value="UniProtKB-KW"/>
</dbReference>
<dbReference type="GO" id="GO:0004831">
    <property type="term" value="F:tyrosine-tRNA ligase activity"/>
    <property type="evidence" value="ECO:0007669"/>
    <property type="project" value="UniProtKB-UniRule"/>
</dbReference>
<dbReference type="GO" id="GO:0006437">
    <property type="term" value="P:tyrosyl-tRNA aminoacylation"/>
    <property type="evidence" value="ECO:0007669"/>
    <property type="project" value="UniProtKB-UniRule"/>
</dbReference>
<dbReference type="CDD" id="cd00165">
    <property type="entry name" value="S4"/>
    <property type="match status" value="1"/>
</dbReference>
<dbReference type="CDD" id="cd00805">
    <property type="entry name" value="TyrRS_core"/>
    <property type="match status" value="1"/>
</dbReference>
<dbReference type="FunFam" id="1.10.240.10:FF:000001">
    <property type="entry name" value="Tyrosine--tRNA ligase"/>
    <property type="match status" value="1"/>
</dbReference>
<dbReference type="FunFam" id="3.40.50.620:FF:000008">
    <property type="entry name" value="Tyrosine--tRNA ligase"/>
    <property type="match status" value="1"/>
</dbReference>
<dbReference type="Gene3D" id="3.40.50.620">
    <property type="entry name" value="HUPs"/>
    <property type="match status" value="1"/>
</dbReference>
<dbReference type="Gene3D" id="3.10.290.10">
    <property type="entry name" value="RNA-binding S4 domain"/>
    <property type="match status" value="1"/>
</dbReference>
<dbReference type="Gene3D" id="1.10.240.10">
    <property type="entry name" value="Tyrosyl-Transfer RNA Synthetase"/>
    <property type="match status" value="1"/>
</dbReference>
<dbReference type="HAMAP" id="MF_02006">
    <property type="entry name" value="Tyr_tRNA_synth_type1"/>
    <property type="match status" value="1"/>
</dbReference>
<dbReference type="InterPro" id="IPR001412">
    <property type="entry name" value="aa-tRNA-synth_I_CS"/>
</dbReference>
<dbReference type="InterPro" id="IPR002305">
    <property type="entry name" value="aa-tRNA-synth_Ic"/>
</dbReference>
<dbReference type="InterPro" id="IPR014729">
    <property type="entry name" value="Rossmann-like_a/b/a_fold"/>
</dbReference>
<dbReference type="InterPro" id="IPR002942">
    <property type="entry name" value="S4_RNA-bd"/>
</dbReference>
<dbReference type="InterPro" id="IPR036986">
    <property type="entry name" value="S4_RNA-bd_sf"/>
</dbReference>
<dbReference type="InterPro" id="IPR054608">
    <property type="entry name" value="SYY-like_C"/>
</dbReference>
<dbReference type="InterPro" id="IPR002307">
    <property type="entry name" value="Tyr-tRNA-ligase"/>
</dbReference>
<dbReference type="InterPro" id="IPR024088">
    <property type="entry name" value="Tyr-tRNA-ligase_bac-type"/>
</dbReference>
<dbReference type="InterPro" id="IPR024107">
    <property type="entry name" value="Tyr-tRNA-ligase_bac_1"/>
</dbReference>
<dbReference type="NCBIfam" id="TIGR00234">
    <property type="entry name" value="tyrS"/>
    <property type="match status" value="1"/>
</dbReference>
<dbReference type="PANTHER" id="PTHR11766:SF0">
    <property type="entry name" value="TYROSINE--TRNA LIGASE, MITOCHONDRIAL"/>
    <property type="match status" value="1"/>
</dbReference>
<dbReference type="PANTHER" id="PTHR11766">
    <property type="entry name" value="TYROSYL-TRNA SYNTHETASE"/>
    <property type="match status" value="1"/>
</dbReference>
<dbReference type="Pfam" id="PF22421">
    <property type="entry name" value="SYY_C-terminal"/>
    <property type="match status" value="1"/>
</dbReference>
<dbReference type="Pfam" id="PF00579">
    <property type="entry name" value="tRNA-synt_1b"/>
    <property type="match status" value="1"/>
</dbReference>
<dbReference type="PRINTS" id="PR01040">
    <property type="entry name" value="TRNASYNTHTYR"/>
</dbReference>
<dbReference type="SMART" id="SM00363">
    <property type="entry name" value="S4"/>
    <property type="match status" value="1"/>
</dbReference>
<dbReference type="SUPFAM" id="SSF55174">
    <property type="entry name" value="Alpha-L RNA-binding motif"/>
    <property type="match status" value="1"/>
</dbReference>
<dbReference type="SUPFAM" id="SSF52374">
    <property type="entry name" value="Nucleotidylyl transferase"/>
    <property type="match status" value="1"/>
</dbReference>
<dbReference type="PROSITE" id="PS00178">
    <property type="entry name" value="AA_TRNA_LIGASE_I"/>
    <property type="match status" value="1"/>
</dbReference>
<dbReference type="PROSITE" id="PS50889">
    <property type="entry name" value="S4"/>
    <property type="match status" value="1"/>
</dbReference>
<organism>
    <name type="scientific">Streptococcus pyogenes serotype M49 (strain NZ131)</name>
    <dbReference type="NCBI Taxonomy" id="471876"/>
    <lineage>
        <taxon>Bacteria</taxon>
        <taxon>Bacillati</taxon>
        <taxon>Bacillota</taxon>
        <taxon>Bacilli</taxon>
        <taxon>Lactobacillales</taxon>
        <taxon>Streptococcaceae</taxon>
        <taxon>Streptococcus</taxon>
    </lineage>
</organism>
<reference key="1">
    <citation type="journal article" date="2008" name="J. Bacteriol.">
        <title>Genome sequence of a nephritogenic and highly transformable M49 strain of Streptococcus pyogenes.</title>
        <authorList>
            <person name="McShan W.M."/>
            <person name="Ferretti J.J."/>
            <person name="Karasawa T."/>
            <person name="Suvorov A.N."/>
            <person name="Lin S."/>
            <person name="Qin B."/>
            <person name="Jia H."/>
            <person name="Kenton S."/>
            <person name="Najar F."/>
            <person name="Wu H."/>
            <person name="Scott J."/>
            <person name="Roe B.A."/>
            <person name="Savic D.J."/>
        </authorList>
    </citation>
    <scope>NUCLEOTIDE SEQUENCE [LARGE SCALE GENOMIC DNA]</scope>
    <source>
        <strain>NZ131</strain>
    </source>
</reference>
<proteinExistence type="inferred from homology"/>
<comment type="function">
    <text evidence="1">Catalyzes the attachment of tyrosine to tRNA(Tyr) in a two-step reaction: tyrosine is first activated by ATP to form Tyr-AMP and then transferred to the acceptor end of tRNA(Tyr).</text>
</comment>
<comment type="catalytic activity">
    <reaction evidence="1">
        <text>tRNA(Tyr) + L-tyrosine + ATP = L-tyrosyl-tRNA(Tyr) + AMP + diphosphate + H(+)</text>
        <dbReference type="Rhea" id="RHEA:10220"/>
        <dbReference type="Rhea" id="RHEA-COMP:9706"/>
        <dbReference type="Rhea" id="RHEA-COMP:9707"/>
        <dbReference type="ChEBI" id="CHEBI:15378"/>
        <dbReference type="ChEBI" id="CHEBI:30616"/>
        <dbReference type="ChEBI" id="CHEBI:33019"/>
        <dbReference type="ChEBI" id="CHEBI:58315"/>
        <dbReference type="ChEBI" id="CHEBI:78442"/>
        <dbReference type="ChEBI" id="CHEBI:78536"/>
        <dbReference type="ChEBI" id="CHEBI:456215"/>
        <dbReference type="EC" id="6.1.1.1"/>
    </reaction>
</comment>
<comment type="subunit">
    <text evidence="1">Homodimer.</text>
</comment>
<comment type="subcellular location">
    <subcellularLocation>
        <location evidence="1">Cytoplasm</location>
    </subcellularLocation>
</comment>
<comment type="similarity">
    <text evidence="1">Belongs to the class-I aminoacyl-tRNA synthetase family. TyrS type 1 subfamily.</text>
</comment>
<feature type="chain" id="PRO_1000189339" description="Tyrosine--tRNA ligase">
    <location>
        <begin position="1"/>
        <end position="418"/>
    </location>
</feature>
<feature type="domain" description="S4 RNA-binding" evidence="1">
    <location>
        <begin position="352"/>
        <end position="418"/>
    </location>
</feature>
<feature type="short sequence motif" description="'HIGH' region">
    <location>
        <begin position="39"/>
        <end position="48"/>
    </location>
</feature>
<feature type="short sequence motif" description="'KMSKS' region">
    <location>
        <begin position="229"/>
        <end position="233"/>
    </location>
</feature>
<feature type="binding site" evidence="1">
    <location>
        <position position="34"/>
    </location>
    <ligand>
        <name>L-tyrosine</name>
        <dbReference type="ChEBI" id="CHEBI:58315"/>
    </ligand>
</feature>
<feature type="binding site" evidence="1">
    <location>
        <position position="169"/>
    </location>
    <ligand>
        <name>L-tyrosine</name>
        <dbReference type="ChEBI" id="CHEBI:58315"/>
    </ligand>
</feature>
<feature type="binding site" evidence="1">
    <location>
        <position position="173"/>
    </location>
    <ligand>
        <name>L-tyrosine</name>
        <dbReference type="ChEBI" id="CHEBI:58315"/>
    </ligand>
</feature>
<feature type="binding site" evidence="1">
    <location>
        <position position="232"/>
    </location>
    <ligand>
        <name>ATP</name>
        <dbReference type="ChEBI" id="CHEBI:30616"/>
    </ligand>
</feature>
<evidence type="ECO:0000255" key="1">
    <source>
        <dbReference type="HAMAP-Rule" id="MF_02006"/>
    </source>
</evidence>
<accession>B5XJ70</accession>
<name>SYY_STRPZ</name>
<protein>
    <recommendedName>
        <fullName evidence="1">Tyrosine--tRNA ligase</fullName>
        <ecNumber evidence="1">6.1.1.1</ecNumber>
    </recommendedName>
    <alternativeName>
        <fullName evidence="1">Tyrosyl-tRNA synthetase</fullName>
        <shortName evidence="1">TyrRS</shortName>
    </alternativeName>
</protein>
<sequence length="418" mass="47371">MNIFEELKTRGLVFQTTDEQALVKALTEGQVSYYTGYDPTADSLHLGHLVAILTSRRLQLAGHKPYALVGGATGLIGDPSFKDAERSLQTKETVLEWSDKIKGQLSTFLDFENGDNKAELVNNYDWFSQISFIDFLRDVGKYFTVNYMMSKDSVKKRIETGISYTEFAYQIMQGYDFYELNDKHNVTLQIGGSDQWGNMTAGTELLRKKADKTGHVMTVPLITDSTGKKFGKSEGNAVWLDADKTSPYEMYQFWLNVMDDDAVRFLKIFTFLSLDEIAEIETQFNAARHERLAQKTLAREVVTLVHGEEAYKQALNITEQLFAGNIKNLSANELKQGLSNVPNYHVQSIDNHNIVEILVAAKISPSKRQAREDVQNGAIYINGDRVQDLDYQLSNDDKIDDQLTVIRRGKKKYAVLTY</sequence>